<protein>
    <recommendedName>
        <fullName evidence="6">Calitoxin</fullName>
    </recommendedName>
    <alternativeName>
        <fullName evidence="7">Calitoxin-Cpp1a</fullName>
    </alternativeName>
</protein>
<proteinExistence type="evidence at protein level"/>
<name>TXCL1_CALPY</name>
<gene>
    <name evidence="6 7" type="ORF">c40761_g1_i1</name>
</gene>
<reference key="1">
    <citation type="journal article" date="2023" name="Toxins">
        <title>Acontia, a specialised defensive structure, has low venom complexity in Calliactis polypus.</title>
        <authorList>
            <person name="Smith H.L."/>
            <person name="Prentis P.J."/>
            <person name="Bryan S.E."/>
            <person name="Norton R.S."/>
            <person name="Broszczak D.A."/>
        </authorList>
    </citation>
    <scope>NUCLEOTIDE SEQUENCE [MRNA]</scope>
    <scope>IDENTIFICATION BY MASS SPECTROMETRY</scope>
    <scope>SUBCELLULAR LOCATION</scope>
    <scope>TISSUE SPECIFICITY</scope>
</reference>
<reference key="2">
    <citation type="journal article" date="2024" name="Genome Biol. Evol.">
        <title>Molecular insights into the low complexity secreted venom of Calliactis polypus.</title>
        <authorList>
            <person name="Smith H.L."/>
            <person name="Broszczak D.A."/>
            <person name="Bryan S.E."/>
            <person name="Norton R.S."/>
            <person name="Prentis P.J."/>
        </authorList>
    </citation>
    <scope>NUCLEOTIDE SEQUENCE [MRNA]</scope>
    <scope>IDENTIFICATION BY MASS SPECTROMETRY</scope>
    <scope>TISSUE SPECIFICITY</scope>
    <scope>SUBCELLULAR LOCATION</scope>
</reference>
<dbReference type="Gene3D" id="2.20.20.10">
    <property type="entry name" value="Anthopleurin-A"/>
    <property type="match status" value="1"/>
</dbReference>
<dbReference type="InterPro" id="IPR023355">
    <property type="entry name" value="Myo_ane_neurotoxin_sf"/>
</dbReference>
<dbReference type="Pfam" id="PF00706">
    <property type="entry name" value="Toxin_4"/>
    <property type="match status" value="1"/>
</dbReference>
<dbReference type="SUPFAM" id="SSF57392">
    <property type="entry name" value="Defensin-like"/>
    <property type="match status" value="1"/>
</dbReference>
<feature type="signal peptide" evidence="3">
    <location>
        <begin position="1"/>
        <end position="20"/>
    </location>
</feature>
<feature type="propeptide" id="PRO_0000462160" evidence="1">
    <location>
        <begin position="21"/>
        <end position="42"/>
    </location>
</feature>
<feature type="chain" id="PRO_0000462161" description="Calitoxin" evidence="9">
    <location>
        <begin position="45"/>
        <end position="92"/>
    </location>
</feature>
<feature type="disulfide bond" evidence="2">
    <location>
        <begin position="47"/>
        <end position="86"/>
    </location>
</feature>
<feature type="disulfide bond" evidence="2">
    <location>
        <begin position="49"/>
        <end position="77"/>
    </location>
</feature>
<feature type="disulfide bond" evidence="2">
    <location>
        <begin position="67"/>
        <end position="87"/>
    </location>
</feature>
<keyword id="KW-0165">Cleavage on pair of basic residues</keyword>
<keyword id="KW-1015">Disulfide bond</keyword>
<keyword id="KW-0872">Ion channel impairing toxin</keyword>
<keyword id="KW-0166">Nematocyst</keyword>
<keyword id="KW-0528">Neurotoxin</keyword>
<keyword id="KW-0964">Secreted</keyword>
<keyword id="KW-0732">Signal</keyword>
<keyword id="KW-0800">Toxin</keyword>
<keyword id="KW-0738">Voltage-gated sodium channel impairing toxin</keyword>
<accession>P0DY39</accession>
<evidence type="ECO:0000250" key="1">
    <source>
        <dbReference type="UniProtKB" id="P14531"/>
    </source>
</evidence>
<evidence type="ECO:0000250" key="2">
    <source>
        <dbReference type="UniProtKB" id="P19651"/>
    </source>
</evidence>
<evidence type="ECO:0000255" key="3"/>
<evidence type="ECO:0000269" key="4">
    <source>
    </source>
</evidence>
<evidence type="ECO:0000269" key="5">
    <source>
    </source>
</evidence>
<evidence type="ECO:0000303" key="6">
    <source>
    </source>
</evidence>
<evidence type="ECO:0000303" key="7">
    <source>
    </source>
</evidence>
<evidence type="ECO:0000305" key="8"/>
<evidence type="ECO:0000305" key="9">
    <source>
    </source>
</evidence>
<organism>
    <name type="scientific">Calliactis polypus</name>
    <name type="common">Hermit crab anemone</name>
    <name type="synonym">Priapus polypus</name>
    <dbReference type="NCBI Taxonomy" id="656064"/>
    <lineage>
        <taxon>Eukaryota</taxon>
        <taxon>Metazoa</taxon>
        <taxon>Cnidaria</taxon>
        <taxon>Anthozoa</taxon>
        <taxon>Hexacorallia</taxon>
        <taxon>Actiniaria</taxon>
        <taxon>Nynantheae</taxon>
        <taxon>Hormathiidae</taxon>
        <taxon>Calliactis</taxon>
    </lineage>
</organism>
<comment type="function">
    <text evidence="1">In neuromuscular preparation of crustaceans, the toxin increased neurotransmitter release, causing repetitive firing of the axons. May affect sodium channels (Nav).</text>
</comment>
<comment type="subcellular location">
    <subcellularLocation>
        <location evidence="4 5">Secreted</location>
    </subcellularLocation>
    <subcellularLocation>
        <location evidence="8">Nematocyst</location>
    </subcellularLocation>
</comment>
<comment type="tissue specificity">
    <text evidence="4 5">Expressed both outside and in acontia, a specialised envenomation structure laden with batteries of venom-containing nematocysts found only in the superfamily Metridioidea.</text>
</comment>
<comment type="similarity">
    <text evidence="8">Belongs to the sea anemone sodium channel inhibitory toxin family.</text>
</comment>
<sequence length="92" mass="10250">MKTQVLVVLVLCVVFCLAESRNSMTSEERGLVSLMRQRDDIAKRLQCKCKGDAPDLSHMSGTIYFSCEGGDNSWKKCNSISVFADCCHKKPT</sequence>